<keyword id="KW-0687">Ribonucleoprotein</keyword>
<keyword id="KW-0689">Ribosomal protein</keyword>
<keyword id="KW-0694">RNA-binding</keyword>
<keyword id="KW-0699">rRNA-binding</keyword>
<comment type="function">
    <text evidence="1">One of the primary rRNA binding proteins, this protein initially binds near the 5'-end of the 23S rRNA. It is important during the early stages of 50S assembly. It makes multiple contacts with different domains of the 23S rRNA in the assembled 50S subunit and ribosome.</text>
</comment>
<comment type="function">
    <text evidence="1">Forms part of the polypeptide exit tunnel.</text>
</comment>
<comment type="subunit">
    <text evidence="1">Part of the 50S ribosomal subunit.</text>
</comment>
<comment type="similarity">
    <text evidence="1">Belongs to the universal ribosomal protein uL4 family.</text>
</comment>
<gene>
    <name evidence="1" type="primary">rpl4</name>
    <name type="ordered locus">TON_0067</name>
</gene>
<evidence type="ECO:0000255" key="1">
    <source>
        <dbReference type="HAMAP-Rule" id="MF_01328"/>
    </source>
</evidence>
<evidence type="ECO:0000305" key="2"/>
<feature type="chain" id="PRO_1000142197" description="Large ribosomal subunit protein uL4">
    <location>
        <begin position="1"/>
        <end position="255"/>
    </location>
</feature>
<proteinExistence type="inferred from homology"/>
<reference key="1">
    <citation type="journal article" date="2008" name="J. Bacteriol.">
        <title>The complete genome sequence of Thermococcus onnurineus NA1 reveals a mixed heterotrophic and carboxydotrophic metabolism.</title>
        <authorList>
            <person name="Lee H.S."/>
            <person name="Kang S.G."/>
            <person name="Bae S.S."/>
            <person name="Lim J.K."/>
            <person name="Cho Y."/>
            <person name="Kim Y.J."/>
            <person name="Jeon J.H."/>
            <person name="Cha S.-S."/>
            <person name="Kwon K.K."/>
            <person name="Kim H.-T."/>
            <person name="Park C.-J."/>
            <person name="Lee H.-W."/>
            <person name="Kim S.I."/>
            <person name="Chun J."/>
            <person name="Colwell R.R."/>
            <person name="Kim S.-J."/>
            <person name="Lee J.-H."/>
        </authorList>
    </citation>
    <scope>NUCLEOTIDE SEQUENCE [LARGE SCALE GENOMIC DNA]</scope>
    <source>
        <strain>NA1</strain>
    </source>
</reference>
<protein>
    <recommendedName>
        <fullName evidence="1">Large ribosomal subunit protein uL4</fullName>
    </recommendedName>
    <alternativeName>
        <fullName evidence="2">50S ribosomal protein L4</fullName>
    </alternativeName>
</protein>
<dbReference type="EMBL" id="CP000855">
    <property type="protein sequence ID" value="ACJ15551.1"/>
    <property type="molecule type" value="Genomic_DNA"/>
</dbReference>
<dbReference type="RefSeq" id="WP_012571024.1">
    <property type="nucleotide sequence ID" value="NC_011529.1"/>
</dbReference>
<dbReference type="SMR" id="B6YSL4"/>
<dbReference type="STRING" id="523850.TON_0067"/>
<dbReference type="GeneID" id="7017713"/>
<dbReference type="KEGG" id="ton:TON_0067"/>
<dbReference type="PATRIC" id="fig|523850.10.peg.67"/>
<dbReference type="eggNOG" id="arCOG04071">
    <property type="taxonomic scope" value="Archaea"/>
</dbReference>
<dbReference type="HOGENOM" id="CLU_026535_0_0_2"/>
<dbReference type="OrthoDB" id="10737at2157"/>
<dbReference type="Proteomes" id="UP000002727">
    <property type="component" value="Chromosome"/>
</dbReference>
<dbReference type="GO" id="GO:1990904">
    <property type="term" value="C:ribonucleoprotein complex"/>
    <property type="evidence" value="ECO:0007669"/>
    <property type="project" value="UniProtKB-KW"/>
</dbReference>
<dbReference type="GO" id="GO:0005840">
    <property type="term" value="C:ribosome"/>
    <property type="evidence" value="ECO:0007669"/>
    <property type="project" value="UniProtKB-KW"/>
</dbReference>
<dbReference type="GO" id="GO:0019843">
    <property type="term" value="F:rRNA binding"/>
    <property type="evidence" value="ECO:0007669"/>
    <property type="project" value="UniProtKB-UniRule"/>
</dbReference>
<dbReference type="GO" id="GO:0003735">
    <property type="term" value="F:structural constituent of ribosome"/>
    <property type="evidence" value="ECO:0007669"/>
    <property type="project" value="InterPro"/>
</dbReference>
<dbReference type="GO" id="GO:0006412">
    <property type="term" value="P:translation"/>
    <property type="evidence" value="ECO:0007669"/>
    <property type="project" value="UniProtKB-UniRule"/>
</dbReference>
<dbReference type="FunFam" id="3.40.1370.10:FF:000011">
    <property type="entry name" value="50S ribosomal protein L4"/>
    <property type="match status" value="1"/>
</dbReference>
<dbReference type="Gene3D" id="3.40.1370.10">
    <property type="match status" value="1"/>
</dbReference>
<dbReference type="HAMAP" id="MF_01328_A">
    <property type="entry name" value="Ribosomal_uL4_A"/>
    <property type="match status" value="1"/>
</dbReference>
<dbReference type="InterPro" id="IPR002136">
    <property type="entry name" value="Ribosomal_uL4"/>
</dbReference>
<dbReference type="InterPro" id="IPR023574">
    <property type="entry name" value="Ribosomal_uL4_dom_sf"/>
</dbReference>
<dbReference type="InterPro" id="IPR013000">
    <property type="entry name" value="Ribosomal_uL4_euk/arc_CS"/>
</dbReference>
<dbReference type="InterPro" id="IPR045240">
    <property type="entry name" value="Ribosomal_uL4_euk/arch"/>
</dbReference>
<dbReference type="InterPro" id="IPR019970">
    <property type="entry name" value="Ribosomall_uL4-arc"/>
</dbReference>
<dbReference type="NCBIfam" id="TIGR03672">
    <property type="entry name" value="rpl4p_arch"/>
    <property type="match status" value="1"/>
</dbReference>
<dbReference type="PANTHER" id="PTHR19431">
    <property type="entry name" value="60S RIBOSOMAL PROTEIN L4"/>
    <property type="match status" value="1"/>
</dbReference>
<dbReference type="Pfam" id="PF00573">
    <property type="entry name" value="Ribosomal_L4"/>
    <property type="match status" value="1"/>
</dbReference>
<dbReference type="SUPFAM" id="SSF52166">
    <property type="entry name" value="Ribosomal protein L4"/>
    <property type="match status" value="1"/>
</dbReference>
<dbReference type="PROSITE" id="PS00939">
    <property type="entry name" value="RIBOSOMAL_L1E"/>
    <property type="match status" value="1"/>
</dbReference>
<organism>
    <name type="scientific">Thermococcus onnurineus (strain NA1)</name>
    <dbReference type="NCBI Taxonomy" id="523850"/>
    <lineage>
        <taxon>Archaea</taxon>
        <taxon>Methanobacteriati</taxon>
        <taxon>Methanobacteriota</taxon>
        <taxon>Thermococci</taxon>
        <taxon>Thermococcales</taxon>
        <taxon>Thermococcaceae</taxon>
        <taxon>Thermococcus</taxon>
    </lineage>
</organism>
<name>RL4_THEON</name>
<accession>B6YSL4</accession>
<sequence length="255" mass="28685">MKVKVFNLEGEPVEEIELPNVFATPFRPDLIRRAVIASWTHRIQPQGRDPLAGKRRVTENIGKGHGMARVERIKTSPRFAAFVPFARGGRRTHPPKVEKIIWEDINKKERRLAIMSAIAATANYDLVRARGHIVDNVPQVPLVVVNDLEKVFKTAQTREIFKKLGVWDDIERAKKNTKIRAGKGKMRGRRYKKAKGPLIVVAKNEGIVQGARNHPGVDVVTVENLGVELLAPGTHPGRLTIWTKGAIERLREIYG</sequence>